<gene>
    <name evidence="1" type="primary">hslO</name>
    <name type="ordered locus">A9601_07201</name>
</gene>
<proteinExistence type="inferred from homology"/>
<comment type="function">
    <text evidence="1">Redox regulated molecular chaperone. Protects both thermally unfolding and oxidatively damaged proteins from irreversible aggregation. Plays an important role in the bacterial defense system toward oxidative stress.</text>
</comment>
<comment type="subcellular location">
    <subcellularLocation>
        <location evidence="1">Cytoplasm</location>
    </subcellularLocation>
</comment>
<comment type="PTM">
    <text evidence="1">Under oxidizing conditions two disulfide bonds are formed involving the reactive cysteines. Under reducing conditions zinc is bound to the reactive cysteines and the protein is inactive.</text>
</comment>
<comment type="similarity">
    <text evidence="1">Belongs to the HSP33 family.</text>
</comment>
<feature type="chain" id="PRO_1000015557" description="33 kDa chaperonin">
    <location>
        <begin position="1"/>
        <end position="302"/>
    </location>
</feature>
<feature type="disulfide bond" description="Redox-active" evidence="1">
    <location>
        <begin position="247"/>
        <end position="249"/>
    </location>
</feature>
<feature type="disulfide bond" description="Redox-active" evidence="1">
    <location>
        <begin position="280"/>
        <end position="283"/>
    </location>
</feature>
<dbReference type="EMBL" id="CP000551">
    <property type="protein sequence ID" value="ABM70006.1"/>
    <property type="molecule type" value="Genomic_DNA"/>
</dbReference>
<dbReference type="RefSeq" id="WP_011818168.1">
    <property type="nucleotide sequence ID" value="NC_008816.1"/>
</dbReference>
<dbReference type="SMR" id="A2BQE5"/>
<dbReference type="STRING" id="146891.A9601_07201"/>
<dbReference type="KEGG" id="pmb:A9601_07201"/>
<dbReference type="eggNOG" id="COG1281">
    <property type="taxonomic scope" value="Bacteria"/>
</dbReference>
<dbReference type="HOGENOM" id="CLU_054493_1_0_3"/>
<dbReference type="OrthoDB" id="9776534at2"/>
<dbReference type="Proteomes" id="UP000002590">
    <property type="component" value="Chromosome"/>
</dbReference>
<dbReference type="GO" id="GO:0005737">
    <property type="term" value="C:cytoplasm"/>
    <property type="evidence" value="ECO:0007669"/>
    <property type="project" value="UniProtKB-SubCell"/>
</dbReference>
<dbReference type="GO" id="GO:0044183">
    <property type="term" value="F:protein folding chaperone"/>
    <property type="evidence" value="ECO:0007669"/>
    <property type="project" value="TreeGrafter"/>
</dbReference>
<dbReference type="GO" id="GO:0051082">
    <property type="term" value="F:unfolded protein binding"/>
    <property type="evidence" value="ECO:0007669"/>
    <property type="project" value="UniProtKB-UniRule"/>
</dbReference>
<dbReference type="GO" id="GO:0042026">
    <property type="term" value="P:protein refolding"/>
    <property type="evidence" value="ECO:0007669"/>
    <property type="project" value="TreeGrafter"/>
</dbReference>
<dbReference type="CDD" id="cd00498">
    <property type="entry name" value="Hsp33"/>
    <property type="match status" value="1"/>
</dbReference>
<dbReference type="Gene3D" id="3.55.30.10">
    <property type="entry name" value="Hsp33 domain"/>
    <property type="match status" value="1"/>
</dbReference>
<dbReference type="Gene3D" id="3.90.1280.10">
    <property type="entry name" value="HSP33 redox switch-like"/>
    <property type="match status" value="1"/>
</dbReference>
<dbReference type="HAMAP" id="MF_00117">
    <property type="entry name" value="HslO"/>
    <property type="match status" value="1"/>
</dbReference>
<dbReference type="InterPro" id="IPR000397">
    <property type="entry name" value="Heat_shock_Hsp33"/>
</dbReference>
<dbReference type="InterPro" id="IPR016154">
    <property type="entry name" value="Heat_shock_Hsp33_C"/>
</dbReference>
<dbReference type="InterPro" id="IPR016153">
    <property type="entry name" value="Heat_shock_Hsp33_N"/>
</dbReference>
<dbReference type="NCBIfam" id="NF001033">
    <property type="entry name" value="PRK00114.1"/>
    <property type="match status" value="1"/>
</dbReference>
<dbReference type="PANTHER" id="PTHR30111">
    <property type="entry name" value="33 KDA CHAPERONIN"/>
    <property type="match status" value="1"/>
</dbReference>
<dbReference type="PANTHER" id="PTHR30111:SF1">
    <property type="entry name" value="33 KDA CHAPERONIN"/>
    <property type="match status" value="1"/>
</dbReference>
<dbReference type="Pfam" id="PF01430">
    <property type="entry name" value="HSP33"/>
    <property type="match status" value="1"/>
</dbReference>
<dbReference type="PIRSF" id="PIRSF005261">
    <property type="entry name" value="Heat_shock_Hsp33"/>
    <property type="match status" value="1"/>
</dbReference>
<dbReference type="SUPFAM" id="SSF64397">
    <property type="entry name" value="Hsp33 domain"/>
    <property type="match status" value="1"/>
</dbReference>
<dbReference type="SUPFAM" id="SSF118352">
    <property type="entry name" value="HSP33 redox switch-like"/>
    <property type="match status" value="1"/>
</dbReference>
<reference key="1">
    <citation type="journal article" date="2007" name="PLoS Genet.">
        <title>Patterns and implications of gene gain and loss in the evolution of Prochlorococcus.</title>
        <authorList>
            <person name="Kettler G.C."/>
            <person name="Martiny A.C."/>
            <person name="Huang K."/>
            <person name="Zucker J."/>
            <person name="Coleman M.L."/>
            <person name="Rodrigue S."/>
            <person name="Chen F."/>
            <person name="Lapidus A."/>
            <person name="Ferriera S."/>
            <person name="Johnson J."/>
            <person name="Steglich C."/>
            <person name="Church G.M."/>
            <person name="Richardson P."/>
            <person name="Chisholm S.W."/>
        </authorList>
    </citation>
    <scope>NUCLEOTIDE SEQUENCE [LARGE SCALE GENOMIC DNA]</scope>
    <source>
        <strain>AS9601</strain>
    </source>
</reference>
<name>HSLO_PROMS</name>
<evidence type="ECO:0000255" key="1">
    <source>
        <dbReference type="HAMAP-Rule" id="MF_00117"/>
    </source>
</evidence>
<sequence length="302" mass="33568">MQDRIVRATAANGGIRLVAVLTTESSLEAKKRHGLSYLTTCILGRAFSASLLLASSMKIMHGRVTLRVRSDGPLKGLLVDAGRDGKVRGYVGNPNLELDLVKIDNDKYSFDFTKALGTGYLNVIRDSGFGEPFTSTVELVNGNIAEDLASYLYHSEQTPSAVFIGEKIQNKSVICSGGLLAQVLPKKDTDPLLISLLEERCKEINSFSEDLFKSKHNLLELIRNIFPDIDDKSISEKARSQEVSFKCKCSKQRSLNAMKMLDKSELEDILKKDGKAELVCEFCKNKYLINFEEIKSMIENQS</sequence>
<accession>A2BQE5</accession>
<protein>
    <recommendedName>
        <fullName evidence="1">33 kDa chaperonin</fullName>
    </recommendedName>
    <alternativeName>
        <fullName evidence="1">Heat shock protein 33 homolog</fullName>
        <shortName evidence="1">HSP33</shortName>
    </alternativeName>
</protein>
<organism>
    <name type="scientific">Prochlorococcus marinus (strain AS9601)</name>
    <dbReference type="NCBI Taxonomy" id="146891"/>
    <lineage>
        <taxon>Bacteria</taxon>
        <taxon>Bacillati</taxon>
        <taxon>Cyanobacteriota</taxon>
        <taxon>Cyanophyceae</taxon>
        <taxon>Synechococcales</taxon>
        <taxon>Prochlorococcaceae</taxon>
        <taxon>Prochlorococcus</taxon>
    </lineage>
</organism>
<keyword id="KW-0143">Chaperone</keyword>
<keyword id="KW-0963">Cytoplasm</keyword>
<keyword id="KW-1015">Disulfide bond</keyword>
<keyword id="KW-0676">Redox-active center</keyword>
<keyword id="KW-0862">Zinc</keyword>